<reference key="1">
    <citation type="journal article" date="2011" name="J. Bacteriol.">
        <title>Genome sequence of lineage III Listeria monocytogenes strain HCC23.</title>
        <authorList>
            <person name="Steele C.L."/>
            <person name="Donaldson J.R."/>
            <person name="Paul D."/>
            <person name="Banes M.M."/>
            <person name="Arick T."/>
            <person name="Bridges S.M."/>
            <person name="Lawrence M.L."/>
        </authorList>
    </citation>
    <scope>NUCLEOTIDE SEQUENCE [LARGE SCALE GENOMIC DNA]</scope>
    <source>
        <strain>HCC23</strain>
    </source>
</reference>
<sequence>MPVISMKQLLEAGVHFGHQTRRWNPKMKKYIFTERNGIYIIDLQKTVKKVDEAFNFMREVASDNGTILFVGTKKQAQESVRDEAIRSGQYFVNHRWLGGTLTNFETIQKRIQHLKKIERMEADGTFEVLPKKEVVLLKKEQEKLERFLGGIKDMKGLPDALFIVDPRKERIAVAEARKLHIPIIGIVDTNCDPDEIDYVIPANDDAIRAVKLLTAKMADAIIEVNQGEELTEAEVAPVEEKATEETTEA</sequence>
<dbReference type="EMBL" id="CP001175">
    <property type="protein sequence ID" value="ACK39256.1"/>
    <property type="molecule type" value="Genomic_DNA"/>
</dbReference>
<dbReference type="RefSeq" id="WP_003723971.1">
    <property type="nucleotide sequence ID" value="NC_011660.1"/>
</dbReference>
<dbReference type="SMR" id="B8DFR3"/>
<dbReference type="GeneID" id="93239536"/>
<dbReference type="KEGG" id="lmh:LMHCC_0907"/>
<dbReference type="HOGENOM" id="CLU_040318_1_2_9"/>
<dbReference type="GO" id="GO:0022627">
    <property type="term" value="C:cytosolic small ribosomal subunit"/>
    <property type="evidence" value="ECO:0007669"/>
    <property type="project" value="TreeGrafter"/>
</dbReference>
<dbReference type="GO" id="GO:0003735">
    <property type="term" value="F:structural constituent of ribosome"/>
    <property type="evidence" value="ECO:0007669"/>
    <property type="project" value="InterPro"/>
</dbReference>
<dbReference type="GO" id="GO:0006412">
    <property type="term" value="P:translation"/>
    <property type="evidence" value="ECO:0007669"/>
    <property type="project" value="UniProtKB-UniRule"/>
</dbReference>
<dbReference type="CDD" id="cd01425">
    <property type="entry name" value="RPS2"/>
    <property type="match status" value="1"/>
</dbReference>
<dbReference type="FunFam" id="1.10.287.610:FF:000001">
    <property type="entry name" value="30S ribosomal protein S2"/>
    <property type="match status" value="1"/>
</dbReference>
<dbReference type="Gene3D" id="3.40.50.10490">
    <property type="entry name" value="Glucose-6-phosphate isomerase like protein, domain 1"/>
    <property type="match status" value="1"/>
</dbReference>
<dbReference type="Gene3D" id="1.10.287.610">
    <property type="entry name" value="Helix hairpin bin"/>
    <property type="match status" value="1"/>
</dbReference>
<dbReference type="HAMAP" id="MF_00291_B">
    <property type="entry name" value="Ribosomal_uS2_B"/>
    <property type="match status" value="1"/>
</dbReference>
<dbReference type="InterPro" id="IPR001865">
    <property type="entry name" value="Ribosomal_uS2"/>
</dbReference>
<dbReference type="InterPro" id="IPR005706">
    <property type="entry name" value="Ribosomal_uS2_bac/mit/plastid"/>
</dbReference>
<dbReference type="InterPro" id="IPR018130">
    <property type="entry name" value="Ribosomal_uS2_CS"/>
</dbReference>
<dbReference type="InterPro" id="IPR023591">
    <property type="entry name" value="Ribosomal_uS2_flav_dom_sf"/>
</dbReference>
<dbReference type="NCBIfam" id="TIGR01011">
    <property type="entry name" value="rpsB_bact"/>
    <property type="match status" value="1"/>
</dbReference>
<dbReference type="PANTHER" id="PTHR12534">
    <property type="entry name" value="30S RIBOSOMAL PROTEIN S2 PROKARYOTIC AND ORGANELLAR"/>
    <property type="match status" value="1"/>
</dbReference>
<dbReference type="PANTHER" id="PTHR12534:SF0">
    <property type="entry name" value="SMALL RIBOSOMAL SUBUNIT PROTEIN US2M"/>
    <property type="match status" value="1"/>
</dbReference>
<dbReference type="Pfam" id="PF00318">
    <property type="entry name" value="Ribosomal_S2"/>
    <property type="match status" value="1"/>
</dbReference>
<dbReference type="PRINTS" id="PR00395">
    <property type="entry name" value="RIBOSOMALS2"/>
</dbReference>
<dbReference type="SUPFAM" id="SSF52313">
    <property type="entry name" value="Ribosomal protein S2"/>
    <property type="match status" value="1"/>
</dbReference>
<dbReference type="PROSITE" id="PS00962">
    <property type="entry name" value="RIBOSOMAL_S2_1"/>
    <property type="match status" value="1"/>
</dbReference>
<dbReference type="PROSITE" id="PS00963">
    <property type="entry name" value="RIBOSOMAL_S2_2"/>
    <property type="match status" value="1"/>
</dbReference>
<name>RS2_LISMH</name>
<proteinExistence type="inferred from homology"/>
<protein>
    <recommendedName>
        <fullName evidence="1">Small ribosomal subunit protein uS2</fullName>
    </recommendedName>
    <alternativeName>
        <fullName evidence="2">30S ribosomal protein S2</fullName>
    </alternativeName>
</protein>
<evidence type="ECO:0000255" key="1">
    <source>
        <dbReference type="HAMAP-Rule" id="MF_00291"/>
    </source>
</evidence>
<evidence type="ECO:0000305" key="2"/>
<feature type="chain" id="PRO_1000194336" description="Small ribosomal subunit protein uS2">
    <location>
        <begin position="1"/>
        <end position="249"/>
    </location>
</feature>
<keyword id="KW-0687">Ribonucleoprotein</keyword>
<keyword id="KW-0689">Ribosomal protein</keyword>
<gene>
    <name evidence="1" type="primary">rpsB</name>
    <name type="ordered locus">LMHCC_0907</name>
</gene>
<comment type="similarity">
    <text evidence="1">Belongs to the universal ribosomal protein uS2 family.</text>
</comment>
<organism>
    <name type="scientific">Listeria monocytogenes serotype 4a (strain HCC23)</name>
    <dbReference type="NCBI Taxonomy" id="552536"/>
    <lineage>
        <taxon>Bacteria</taxon>
        <taxon>Bacillati</taxon>
        <taxon>Bacillota</taxon>
        <taxon>Bacilli</taxon>
        <taxon>Bacillales</taxon>
        <taxon>Listeriaceae</taxon>
        <taxon>Listeria</taxon>
    </lineage>
</organism>
<accession>B8DFR3</accession>